<keyword id="KW-0028">Amino-acid biosynthesis</keyword>
<keyword id="KW-0067">ATP-binding</keyword>
<keyword id="KW-0963">Cytoplasm</keyword>
<keyword id="KW-0418">Kinase</keyword>
<keyword id="KW-0547">Nucleotide-binding</keyword>
<keyword id="KW-0791">Threonine biosynthesis</keyword>
<keyword id="KW-0808">Transferase</keyword>
<organism>
    <name type="scientific">Staphylococcus aureus (strain N315)</name>
    <dbReference type="NCBI Taxonomy" id="158879"/>
    <lineage>
        <taxon>Bacteria</taxon>
        <taxon>Bacillati</taxon>
        <taxon>Bacillota</taxon>
        <taxon>Bacilli</taxon>
        <taxon>Bacillales</taxon>
        <taxon>Staphylococcaceae</taxon>
        <taxon>Staphylococcus</taxon>
    </lineage>
</organism>
<accession>P65229</accession>
<accession>Q99UE6</accession>
<dbReference type="EC" id="2.7.1.39" evidence="1"/>
<dbReference type="EMBL" id="BA000018">
    <property type="protein sequence ID" value="BAB42423.1"/>
    <property type="molecule type" value="Genomic_DNA"/>
</dbReference>
<dbReference type="PIR" id="C89908">
    <property type="entry name" value="C89908"/>
</dbReference>
<dbReference type="RefSeq" id="WP_000073180.1">
    <property type="nucleotide sequence ID" value="NC_002745.2"/>
</dbReference>
<dbReference type="SMR" id="P65229"/>
<dbReference type="EnsemblBacteria" id="BAB42423">
    <property type="protein sequence ID" value="BAB42423"/>
    <property type="gene ID" value="BAB42423"/>
</dbReference>
<dbReference type="KEGG" id="sau:SA1166"/>
<dbReference type="HOGENOM" id="CLU_041243_0_0_9"/>
<dbReference type="UniPathway" id="UPA00050">
    <property type="reaction ID" value="UER00064"/>
</dbReference>
<dbReference type="GO" id="GO:0005737">
    <property type="term" value="C:cytoplasm"/>
    <property type="evidence" value="ECO:0007669"/>
    <property type="project" value="UniProtKB-SubCell"/>
</dbReference>
<dbReference type="GO" id="GO:0005524">
    <property type="term" value="F:ATP binding"/>
    <property type="evidence" value="ECO:0007669"/>
    <property type="project" value="UniProtKB-UniRule"/>
</dbReference>
<dbReference type="GO" id="GO:0004413">
    <property type="term" value="F:homoserine kinase activity"/>
    <property type="evidence" value="ECO:0007669"/>
    <property type="project" value="UniProtKB-UniRule"/>
</dbReference>
<dbReference type="GO" id="GO:0009088">
    <property type="term" value="P:threonine biosynthetic process"/>
    <property type="evidence" value="ECO:0007669"/>
    <property type="project" value="UniProtKB-UniRule"/>
</dbReference>
<dbReference type="Gene3D" id="3.30.230.10">
    <property type="match status" value="1"/>
</dbReference>
<dbReference type="Gene3D" id="3.30.70.890">
    <property type="entry name" value="GHMP kinase, C-terminal domain"/>
    <property type="match status" value="1"/>
</dbReference>
<dbReference type="HAMAP" id="MF_00384">
    <property type="entry name" value="Homoser_kinase"/>
    <property type="match status" value="1"/>
</dbReference>
<dbReference type="InterPro" id="IPR013750">
    <property type="entry name" value="GHMP_kinase_C_dom"/>
</dbReference>
<dbReference type="InterPro" id="IPR036554">
    <property type="entry name" value="GHMP_kinase_C_sf"/>
</dbReference>
<dbReference type="InterPro" id="IPR006204">
    <property type="entry name" value="GHMP_kinase_N_dom"/>
</dbReference>
<dbReference type="InterPro" id="IPR006203">
    <property type="entry name" value="GHMP_knse_ATP-bd_CS"/>
</dbReference>
<dbReference type="InterPro" id="IPR000870">
    <property type="entry name" value="Homoserine_kinase"/>
</dbReference>
<dbReference type="InterPro" id="IPR020568">
    <property type="entry name" value="Ribosomal_Su5_D2-typ_SF"/>
</dbReference>
<dbReference type="InterPro" id="IPR014721">
    <property type="entry name" value="Ribsml_uS5_D2-typ_fold_subgr"/>
</dbReference>
<dbReference type="NCBIfam" id="TIGR00191">
    <property type="entry name" value="thrB"/>
    <property type="match status" value="1"/>
</dbReference>
<dbReference type="PANTHER" id="PTHR20861:SF1">
    <property type="entry name" value="HOMOSERINE KINASE"/>
    <property type="match status" value="1"/>
</dbReference>
<dbReference type="PANTHER" id="PTHR20861">
    <property type="entry name" value="HOMOSERINE/4-DIPHOSPHOCYTIDYL-2-C-METHYL-D-ERYTHRITOL KINASE"/>
    <property type="match status" value="1"/>
</dbReference>
<dbReference type="Pfam" id="PF08544">
    <property type="entry name" value="GHMP_kinases_C"/>
    <property type="match status" value="1"/>
</dbReference>
<dbReference type="Pfam" id="PF00288">
    <property type="entry name" value="GHMP_kinases_N"/>
    <property type="match status" value="1"/>
</dbReference>
<dbReference type="PIRSF" id="PIRSF000676">
    <property type="entry name" value="Homoser_kin"/>
    <property type="match status" value="1"/>
</dbReference>
<dbReference type="PRINTS" id="PR00958">
    <property type="entry name" value="HOMSERKINASE"/>
</dbReference>
<dbReference type="SUPFAM" id="SSF55060">
    <property type="entry name" value="GHMP Kinase, C-terminal domain"/>
    <property type="match status" value="1"/>
</dbReference>
<dbReference type="SUPFAM" id="SSF54211">
    <property type="entry name" value="Ribosomal protein S5 domain 2-like"/>
    <property type="match status" value="1"/>
</dbReference>
<dbReference type="PROSITE" id="PS00627">
    <property type="entry name" value="GHMP_KINASES_ATP"/>
    <property type="match status" value="1"/>
</dbReference>
<protein>
    <recommendedName>
        <fullName evidence="1">Homoserine kinase</fullName>
        <shortName evidence="1">HK</shortName>
        <shortName evidence="1">HSK</shortName>
        <ecNumber evidence="1">2.7.1.39</ecNumber>
    </recommendedName>
</protein>
<feature type="chain" id="PRO_0000156606" description="Homoserine kinase">
    <location>
        <begin position="1"/>
        <end position="304"/>
    </location>
</feature>
<feature type="binding site" evidence="1">
    <location>
        <begin position="90"/>
        <end position="100"/>
    </location>
    <ligand>
        <name>ATP</name>
        <dbReference type="ChEBI" id="CHEBI:30616"/>
    </ligand>
</feature>
<gene>
    <name evidence="1" type="primary">thrB</name>
    <name type="ordered locus">SA1166</name>
</gene>
<name>KHSE_STAAN</name>
<comment type="function">
    <text evidence="1">Catalyzes the ATP-dependent phosphorylation of L-homoserine to L-homoserine phosphate.</text>
</comment>
<comment type="catalytic activity">
    <reaction evidence="1">
        <text>L-homoserine + ATP = O-phospho-L-homoserine + ADP + H(+)</text>
        <dbReference type="Rhea" id="RHEA:13985"/>
        <dbReference type="ChEBI" id="CHEBI:15378"/>
        <dbReference type="ChEBI" id="CHEBI:30616"/>
        <dbReference type="ChEBI" id="CHEBI:57476"/>
        <dbReference type="ChEBI" id="CHEBI:57590"/>
        <dbReference type="ChEBI" id="CHEBI:456216"/>
        <dbReference type="EC" id="2.7.1.39"/>
    </reaction>
</comment>
<comment type="pathway">
    <text evidence="1">Amino-acid biosynthesis; L-threonine biosynthesis; L-threonine from L-aspartate: step 4/5.</text>
</comment>
<comment type="subcellular location">
    <subcellularLocation>
        <location evidence="1">Cytoplasm</location>
    </subcellularLocation>
</comment>
<comment type="similarity">
    <text evidence="1">Belongs to the GHMP kinase family. Homoserine kinase subfamily.</text>
</comment>
<sequence>MSNVLELTIPASTANLGVGFDSIGMALDKFLHLSVKETSGTKWEYIFHDDASKQLPTDETNFIYHVAQQVASKYSVDLPILCIEMRSDIPLARGLGSSASALVGAIYIANYFGDIQLSKHEVLQLATEIEGHPDNVAPTIYGGLIAGFYNDVSKETSVAHIDIPDVDVIVTIPTYELKTEASRRALPQKLTHSEAVKSSAISNTMICALAQHNYELAGKLMQQDGFHEPYRQHLIAEFDEVKTIASQHNAYATVISGAGPTILIFSRKENSGELVRSLNSQVVSCHSELVDINISGVKERIVYQ</sequence>
<evidence type="ECO:0000255" key="1">
    <source>
        <dbReference type="HAMAP-Rule" id="MF_00384"/>
    </source>
</evidence>
<proteinExistence type="inferred from homology"/>
<reference key="1">
    <citation type="journal article" date="2001" name="Lancet">
        <title>Whole genome sequencing of meticillin-resistant Staphylococcus aureus.</title>
        <authorList>
            <person name="Kuroda M."/>
            <person name="Ohta T."/>
            <person name="Uchiyama I."/>
            <person name="Baba T."/>
            <person name="Yuzawa H."/>
            <person name="Kobayashi I."/>
            <person name="Cui L."/>
            <person name="Oguchi A."/>
            <person name="Aoki K."/>
            <person name="Nagai Y."/>
            <person name="Lian J.-Q."/>
            <person name="Ito T."/>
            <person name="Kanamori M."/>
            <person name="Matsumaru H."/>
            <person name="Maruyama A."/>
            <person name="Murakami H."/>
            <person name="Hosoyama A."/>
            <person name="Mizutani-Ui Y."/>
            <person name="Takahashi N.K."/>
            <person name="Sawano T."/>
            <person name="Inoue R."/>
            <person name="Kaito C."/>
            <person name="Sekimizu K."/>
            <person name="Hirakawa H."/>
            <person name="Kuhara S."/>
            <person name="Goto S."/>
            <person name="Yabuzaki J."/>
            <person name="Kanehisa M."/>
            <person name="Yamashita A."/>
            <person name="Oshima K."/>
            <person name="Furuya K."/>
            <person name="Yoshino C."/>
            <person name="Shiba T."/>
            <person name="Hattori M."/>
            <person name="Ogasawara N."/>
            <person name="Hayashi H."/>
            <person name="Hiramatsu K."/>
        </authorList>
    </citation>
    <scope>NUCLEOTIDE SEQUENCE [LARGE SCALE GENOMIC DNA]</scope>
    <source>
        <strain>N315</strain>
    </source>
</reference>